<sequence length="227" mass="24637">MAWKSGGASHSELIHNLRKNGIIKTDKVFEVMLATDRSHYAECNPYMDSPQSIGFQATISAPHMHAYALELLFDQLHEGAKALDVGSGSGILTACFARMVGCTGKVIGIDHIKELVDDSINNVRKDDPTLLSSGRVQLVVGDGRMGYAEEAPYDAIHVGAAAPVVPQALIDQLKPGGRLILPVGPAGGNQMLEQYDKLQDGSVKMKPLMGVIYVPLTDKEKQWSRWK</sequence>
<keyword id="KW-0007">Acetylation</keyword>
<keyword id="KW-0963">Cytoplasm</keyword>
<keyword id="KW-0489">Methyltransferase</keyword>
<keyword id="KW-1185">Reference proteome</keyword>
<keyword id="KW-0949">S-adenosyl-L-methionine</keyword>
<keyword id="KW-0808">Transferase</keyword>
<reference key="1">
    <citation type="submission" date="2005-06" db="EMBL/GenBank/DDBJ databases">
        <title>DNA sequences of macaque genes expressed in brain or testis and its evolutionary implications.</title>
        <authorList>
            <consortium name="International consortium for macaque cDNA sequencing and analysis"/>
        </authorList>
    </citation>
    <scope>NUCLEOTIDE SEQUENCE [LARGE SCALE MRNA]</scope>
    <source>
        <tissue>Parietal cortex</tissue>
    </source>
</reference>
<gene>
    <name type="primary">PCMT1</name>
    <name type="ORF">QnpA-11118</name>
</gene>
<protein>
    <recommendedName>
        <fullName evidence="2">Protein-L-isoaspartate(D-aspartate) O-methyltransferase</fullName>
        <shortName>PIMT</shortName>
        <ecNumber evidence="2">2.1.1.77</ecNumber>
    </recommendedName>
    <alternativeName>
        <fullName>L-isoaspartyl protein carboxyl methyltransferase</fullName>
    </alternativeName>
    <alternativeName>
        <fullName>Protein L-isoaspartyl/D-aspartyl methyltransferase</fullName>
    </alternativeName>
    <alternativeName>
        <fullName>Protein-beta-aspartate methyltransferase</fullName>
    </alternativeName>
</protein>
<comment type="function">
    <text evidence="2">Initiates the repair of damaged proteins by catalyzing methyl esterification of L-isoaspartyl and D-aspartyl residues produced by spontaneous isomerization and racemization of L-aspartyl and L-asparaginyl residues in aging peptides and proteins (By similarity). Acts on EIF4EBP2, microtubule-associated protein 2, calreticulin, clathrin light chains a and b, Ubiquitin C-terminal hydrolase isozyme L1, phosphatidylethanolamine-binding protein 1, stathmin, beta-synuclein and alpha-synuclein (By similarity).</text>
</comment>
<comment type="catalytic activity">
    <reaction evidence="2">
        <text>[protein]-L-isoaspartate + S-adenosyl-L-methionine = [protein]-L-isoaspartate alpha-methyl ester + S-adenosyl-L-homocysteine</text>
        <dbReference type="Rhea" id="RHEA:12705"/>
        <dbReference type="Rhea" id="RHEA-COMP:12143"/>
        <dbReference type="Rhea" id="RHEA-COMP:12144"/>
        <dbReference type="ChEBI" id="CHEBI:57856"/>
        <dbReference type="ChEBI" id="CHEBI:59789"/>
        <dbReference type="ChEBI" id="CHEBI:90596"/>
        <dbReference type="ChEBI" id="CHEBI:90598"/>
        <dbReference type="EC" id="2.1.1.77"/>
    </reaction>
    <physiologicalReaction direction="left-to-right" evidence="2">
        <dbReference type="Rhea" id="RHEA:12706"/>
    </physiologicalReaction>
</comment>
<comment type="subunit">
    <text evidence="1">Monomer.</text>
</comment>
<comment type="subcellular location">
    <subcellularLocation>
        <location evidence="1">Cytoplasm</location>
        <location evidence="1">Cytosol</location>
    </subcellularLocation>
</comment>
<comment type="similarity">
    <text evidence="4">Belongs to the methyltransferase superfamily. L-isoaspartyl/D-aspartyl protein methyltransferase family.</text>
</comment>
<comment type="sequence caution" evidence="4">
    <conflict type="erroneous initiation">
        <sequence resource="EMBL-CDS" id="BAE01655"/>
    </conflict>
</comment>
<evidence type="ECO:0000250" key="1">
    <source>
        <dbReference type="UniProtKB" id="P22061"/>
    </source>
</evidence>
<evidence type="ECO:0000250" key="2">
    <source>
        <dbReference type="UniProtKB" id="P23506"/>
    </source>
</evidence>
<evidence type="ECO:0000250" key="3">
    <source>
        <dbReference type="UniProtKB" id="Q27869"/>
    </source>
</evidence>
<evidence type="ECO:0000305" key="4"/>
<dbReference type="EC" id="2.1.1.77" evidence="2"/>
<dbReference type="EMBL" id="AB169573">
    <property type="protein sequence ID" value="BAE01655.1"/>
    <property type="status" value="ALT_INIT"/>
    <property type="molecule type" value="mRNA"/>
</dbReference>
<dbReference type="SMR" id="Q4R5H0"/>
<dbReference type="STRING" id="9541.ENSMFAP00000000458"/>
<dbReference type="eggNOG" id="KOG1661">
    <property type="taxonomic scope" value="Eukaryota"/>
</dbReference>
<dbReference type="OrthoDB" id="10254665at2759"/>
<dbReference type="Proteomes" id="UP000233100">
    <property type="component" value="Unplaced"/>
</dbReference>
<dbReference type="GO" id="GO:0005829">
    <property type="term" value="C:cytosol"/>
    <property type="evidence" value="ECO:0007669"/>
    <property type="project" value="UniProtKB-SubCell"/>
</dbReference>
<dbReference type="GO" id="GO:0004719">
    <property type="term" value="F:protein-L-isoaspartate (D-aspartate) O-methyltransferase activity"/>
    <property type="evidence" value="ECO:0000250"/>
    <property type="project" value="UniProtKB"/>
</dbReference>
<dbReference type="GO" id="GO:0006479">
    <property type="term" value="P:protein methylation"/>
    <property type="evidence" value="ECO:0000250"/>
    <property type="project" value="UniProtKB"/>
</dbReference>
<dbReference type="CDD" id="cd02440">
    <property type="entry name" value="AdoMet_MTases"/>
    <property type="match status" value="1"/>
</dbReference>
<dbReference type="FunFam" id="3.40.50.150:FF:000027">
    <property type="entry name" value="Protein-L-isoaspartate O-methyltransferase"/>
    <property type="match status" value="1"/>
</dbReference>
<dbReference type="Gene3D" id="3.40.50.150">
    <property type="entry name" value="Vaccinia Virus protein VP39"/>
    <property type="match status" value="1"/>
</dbReference>
<dbReference type="InterPro" id="IPR000682">
    <property type="entry name" value="PCMT"/>
</dbReference>
<dbReference type="InterPro" id="IPR029063">
    <property type="entry name" value="SAM-dependent_MTases_sf"/>
</dbReference>
<dbReference type="NCBIfam" id="TIGR00080">
    <property type="entry name" value="pimt"/>
    <property type="match status" value="1"/>
</dbReference>
<dbReference type="PANTHER" id="PTHR11579">
    <property type="entry name" value="PROTEIN-L-ISOASPARTATE O-METHYLTRANSFERASE"/>
    <property type="match status" value="1"/>
</dbReference>
<dbReference type="PANTHER" id="PTHR11579:SF7">
    <property type="entry name" value="PROTEIN-L-ISOASPARTATE(D-ASPARTATE) O-METHYLTRANSFERASE"/>
    <property type="match status" value="1"/>
</dbReference>
<dbReference type="Pfam" id="PF01135">
    <property type="entry name" value="PCMT"/>
    <property type="match status" value="1"/>
</dbReference>
<dbReference type="SUPFAM" id="SSF53335">
    <property type="entry name" value="S-adenosyl-L-methionine-dependent methyltransferases"/>
    <property type="match status" value="1"/>
</dbReference>
<dbReference type="PROSITE" id="PS01279">
    <property type="entry name" value="PCMT"/>
    <property type="match status" value="1"/>
</dbReference>
<feature type="initiator methionine" description="Removed" evidence="1">
    <location>
        <position position="1"/>
    </location>
</feature>
<feature type="chain" id="PRO_0000253633" description="Protein-L-isoaspartate(D-aspartate) O-methyltransferase">
    <location>
        <begin position="2"/>
        <end position="227"/>
    </location>
</feature>
<feature type="active site" evidence="3">
    <location>
        <position position="60"/>
    </location>
</feature>
<feature type="binding site" evidence="1">
    <location>
        <begin position="57"/>
        <end position="60"/>
    </location>
    <ligand>
        <name>S-adenosyl-L-homocysteine</name>
        <dbReference type="ChEBI" id="CHEBI:57856"/>
    </ligand>
</feature>
<feature type="binding site" evidence="1">
    <location>
        <position position="65"/>
    </location>
    <ligand>
        <name>S-adenosyl-L-homocysteine</name>
        <dbReference type="ChEBI" id="CHEBI:57856"/>
    </ligand>
</feature>
<feature type="binding site" evidence="1">
    <location>
        <position position="89"/>
    </location>
    <ligand>
        <name>S-adenosyl-L-homocysteine</name>
        <dbReference type="ChEBI" id="CHEBI:57856"/>
    </ligand>
</feature>
<feature type="binding site" evidence="1">
    <location>
        <begin position="110"/>
        <end position="111"/>
    </location>
    <ligand>
        <name>S-adenosyl-L-homocysteine</name>
        <dbReference type="ChEBI" id="CHEBI:57856"/>
    </ligand>
</feature>
<feature type="binding site" evidence="1">
    <location>
        <begin position="142"/>
        <end position="143"/>
    </location>
    <ligand>
        <name>S-adenosyl-L-homocysteine</name>
        <dbReference type="ChEBI" id="CHEBI:57856"/>
    </ligand>
</feature>
<feature type="binding site" evidence="1">
    <location>
        <position position="217"/>
    </location>
    <ligand>
        <name>S-adenosyl-L-homocysteine</name>
        <dbReference type="ChEBI" id="CHEBI:57856"/>
    </ligand>
</feature>
<feature type="binding site" evidence="1">
    <location>
        <position position="222"/>
    </location>
    <ligand>
        <name>S-adenosyl-L-homocysteine</name>
        <dbReference type="ChEBI" id="CHEBI:57856"/>
    </ligand>
</feature>
<feature type="modified residue" description="N-acetylalanine" evidence="1">
    <location>
        <position position="2"/>
    </location>
</feature>
<organism>
    <name type="scientific">Macaca fascicularis</name>
    <name type="common">Crab-eating macaque</name>
    <name type="synonym">Cynomolgus monkey</name>
    <dbReference type="NCBI Taxonomy" id="9541"/>
    <lineage>
        <taxon>Eukaryota</taxon>
        <taxon>Metazoa</taxon>
        <taxon>Chordata</taxon>
        <taxon>Craniata</taxon>
        <taxon>Vertebrata</taxon>
        <taxon>Euteleostomi</taxon>
        <taxon>Mammalia</taxon>
        <taxon>Eutheria</taxon>
        <taxon>Euarchontoglires</taxon>
        <taxon>Primates</taxon>
        <taxon>Haplorrhini</taxon>
        <taxon>Catarrhini</taxon>
        <taxon>Cercopithecidae</taxon>
        <taxon>Cercopithecinae</taxon>
        <taxon>Macaca</taxon>
    </lineage>
</organism>
<name>PIMT_MACFA</name>
<accession>Q4R5H0</accession>
<proteinExistence type="evidence at transcript level"/>